<reference key="1">
    <citation type="journal article" date="2003" name="Proc. Natl. Acad. Sci. U.S.A.">
        <title>Two previously undescribed members of the mouse CPEB family of genes and their inducible expression in the principal cell layers of the hippocampus.</title>
        <authorList>
            <person name="Theis M."/>
            <person name="Si K."/>
            <person name="Kandel E.R."/>
        </authorList>
    </citation>
    <scope>NUCLEOTIDE SEQUENCE [MRNA] (ISOFORMS 1; 2; 3 AND 4)</scope>
    <scope>INDUCTION</scope>
    <scope>TISSUE SPECIFICITY</scope>
    <source>
        <strain>BALB/cJ</strain>
        <tissue>Brain</tissue>
    </source>
</reference>
<reference key="2">
    <citation type="journal article" date="2005" name="Science">
        <title>The transcriptional landscape of the mammalian genome.</title>
        <authorList>
            <person name="Carninci P."/>
            <person name="Kasukawa T."/>
            <person name="Katayama S."/>
            <person name="Gough J."/>
            <person name="Frith M.C."/>
            <person name="Maeda N."/>
            <person name="Oyama R."/>
            <person name="Ravasi T."/>
            <person name="Lenhard B."/>
            <person name="Wells C."/>
            <person name="Kodzius R."/>
            <person name="Shimokawa K."/>
            <person name="Bajic V.B."/>
            <person name="Brenner S.E."/>
            <person name="Batalov S."/>
            <person name="Forrest A.R."/>
            <person name="Zavolan M."/>
            <person name="Davis M.J."/>
            <person name="Wilming L.G."/>
            <person name="Aidinis V."/>
            <person name="Allen J.E."/>
            <person name="Ambesi-Impiombato A."/>
            <person name="Apweiler R."/>
            <person name="Aturaliya R.N."/>
            <person name="Bailey T.L."/>
            <person name="Bansal M."/>
            <person name="Baxter L."/>
            <person name="Beisel K.W."/>
            <person name="Bersano T."/>
            <person name="Bono H."/>
            <person name="Chalk A.M."/>
            <person name="Chiu K.P."/>
            <person name="Choudhary V."/>
            <person name="Christoffels A."/>
            <person name="Clutterbuck D.R."/>
            <person name="Crowe M.L."/>
            <person name="Dalla E."/>
            <person name="Dalrymple B.P."/>
            <person name="de Bono B."/>
            <person name="Della Gatta G."/>
            <person name="di Bernardo D."/>
            <person name="Down T."/>
            <person name="Engstrom P."/>
            <person name="Fagiolini M."/>
            <person name="Faulkner G."/>
            <person name="Fletcher C.F."/>
            <person name="Fukushima T."/>
            <person name="Furuno M."/>
            <person name="Futaki S."/>
            <person name="Gariboldi M."/>
            <person name="Georgii-Hemming P."/>
            <person name="Gingeras T.R."/>
            <person name="Gojobori T."/>
            <person name="Green R.E."/>
            <person name="Gustincich S."/>
            <person name="Harbers M."/>
            <person name="Hayashi Y."/>
            <person name="Hensch T.K."/>
            <person name="Hirokawa N."/>
            <person name="Hill D."/>
            <person name="Huminiecki L."/>
            <person name="Iacono M."/>
            <person name="Ikeo K."/>
            <person name="Iwama A."/>
            <person name="Ishikawa T."/>
            <person name="Jakt M."/>
            <person name="Kanapin A."/>
            <person name="Katoh M."/>
            <person name="Kawasawa Y."/>
            <person name="Kelso J."/>
            <person name="Kitamura H."/>
            <person name="Kitano H."/>
            <person name="Kollias G."/>
            <person name="Krishnan S.P."/>
            <person name="Kruger A."/>
            <person name="Kummerfeld S.K."/>
            <person name="Kurochkin I.V."/>
            <person name="Lareau L.F."/>
            <person name="Lazarevic D."/>
            <person name="Lipovich L."/>
            <person name="Liu J."/>
            <person name="Liuni S."/>
            <person name="McWilliam S."/>
            <person name="Madan Babu M."/>
            <person name="Madera M."/>
            <person name="Marchionni L."/>
            <person name="Matsuda H."/>
            <person name="Matsuzawa S."/>
            <person name="Miki H."/>
            <person name="Mignone F."/>
            <person name="Miyake S."/>
            <person name="Morris K."/>
            <person name="Mottagui-Tabar S."/>
            <person name="Mulder N."/>
            <person name="Nakano N."/>
            <person name="Nakauchi H."/>
            <person name="Ng P."/>
            <person name="Nilsson R."/>
            <person name="Nishiguchi S."/>
            <person name="Nishikawa S."/>
            <person name="Nori F."/>
            <person name="Ohara O."/>
            <person name="Okazaki Y."/>
            <person name="Orlando V."/>
            <person name="Pang K.C."/>
            <person name="Pavan W.J."/>
            <person name="Pavesi G."/>
            <person name="Pesole G."/>
            <person name="Petrovsky N."/>
            <person name="Piazza S."/>
            <person name="Reed J."/>
            <person name="Reid J.F."/>
            <person name="Ring B.Z."/>
            <person name="Ringwald M."/>
            <person name="Rost B."/>
            <person name="Ruan Y."/>
            <person name="Salzberg S.L."/>
            <person name="Sandelin A."/>
            <person name="Schneider C."/>
            <person name="Schoenbach C."/>
            <person name="Sekiguchi K."/>
            <person name="Semple C.A."/>
            <person name="Seno S."/>
            <person name="Sessa L."/>
            <person name="Sheng Y."/>
            <person name="Shibata Y."/>
            <person name="Shimada H."/>
            <person name="Shimada K."/>
            <person name="Silva D."/>
            <person name="Sinclair B."/>
            <person name="Sperling S."/>
            <person name="Stupka E."/>
            <person name="Sugiura K."/>
            <person name="Sultana R."/>
            <person name="Takenaka Y."/>
            <person name="Taki K."/>
            <person name="Tammoja K."/>
            <person name="Tan S.L."/>
            <person name="Tang S."/>
            <person name="Taylor M.S."/>
            <person name="Tegner J."/>
            <person name="Teichmann S.A."/>
            <person name="Ueda H.R."/>
            <person name="van Nimwegen E."/>
            <person name="Verardo R."/>
            <person name="Wei C.L."/>
            <person name="Yagi K."/>
            <person name="Yamanishi H."/>
            <person name="Zabarovsky E."/>
            <person name="Zhu S."/>
            <person name="Zimmer A."/>
            <person name="Hide W."/>
            <person name="Bult C."/>
            <person name="Grimmond S.M."/>
            <person name="Teasdale R.D."/>
            <person name="Liu E.T."/>
            <person name="Brusic V."/>
            <person name="Quackenbush J."/>
            <person name="Wahlestedt C."/>
            <person name="Mattick J.S."/>
            <person name="Hume D.A."/>
            <person name="Kai C."/>
            <person name="Sasaki D."/>
            <person name="Tomaru Y."/>
            <person name="Fukuda S."/>
            <person name="Kanamori-Katayama M."/>
            <person name="Suzuki M."/>
            <person name="Aoki J."/>
            <person name="Arakawa T."/>
            <person name="Iida J."/>
            <person name="Imamura K."/>
            <person name="Itoh M."/>
            <person name="Kato T."/>
            <person name="Kawaji H."/>
            <person name="Kawagashira N."/>
            <person name="Kawashima T."/>
            <person name="Kojima M."/>
            <person name="Kondo S."/>
            <person name="Konno H."/>
            <person name="Nakano K."/>
            <person name="Ninomiya N."/>
            <person name="Nishio T."/>
            <person name="Okada M."/>
            <person name="Plessy C."/>
            <person name="Shibata K."/>
            <person name="Shiraki T."/>
            <person name="Suzuki S."/>
            <person name="Tagami M."/>
            <person name="Waki K."/>
            <person name="Watahiki A."/>
            <person name="Okamura-Oho Y."/>
            <person name="Suzuki H."/>
            <person name="Kawai J."/>
            <person name="Hayashizaki Y."/>
        </authorList>
    </citation>
    <scope>NUCLEOTIDE SEQUENCE [LARGE SCALE MRNA] (ISOFORMS 1 AND 5)</scope>
    <source>
        <strain>C57BL/6J</strain>
    </source>
</reference>
<reference key="3">
    <citation type="submission" date="2005-02" db="EMBL/GenBank/DDBJ databases">
        <title>Prediction of the coding sequences of mouse homologues of KIAA gene. The complete nucleotide sequences of mouse KIAA-homologous cDNAs identified by screening of terminal sequences of cDNA clones randomly sampled from size-fractionated libraries.</title>
        <authorList>
            <person name="Okazaki N."/>
            <person name="Kikuno R.F."/>
            <person name="Ohara R."/>
            <person name="Inamoto S."/>
            <person name="Nagase T."/>
            <person name="Ohara O."/>
            <person name="Koga H."/>
        </authorList>
    </citation>
    <scope>NUCLEOTIDE SEQUENCE [LARGE SCALE MRNA] (ISOFORM 1)</scope>
    <source>
        <tissue>Fetal brain</tissue>
    </source>
</reference>
<reference key="4">
    <citation type="journal article" date="2004" name="Genome Res.">
        <title>The status, quality, and expansion of the NIH full-length cDNA project: the Mammalian Gene Collection (MGC).</title>
        <authorList>
            <consortium name="The MGC Project Team"/>
        </authorList>
    </citation>
    <scope>NUCLEOTIDE SEQUENCE [LARGE SCALE MRNA] (ISOFORM 6)</scope>
</reference>
<reference key="5">
    <citation type="journal article" date="2006" name="EMBO J.">
        <title>CPEB3 and CPEB4 in neurons: analysis of RNA-binding specificity and translational control of AMPA receptor GluR2 mRNA.</title>
        <authorList>
            <person name="Huang Y.S."/>
            <person name="Kan M.C."/>
            <person name="Lin C.L."/>
            <person name="Richter J.D."/>
        </authorList>
    </citation>
    <scope>FUNCTION</scope>
    <scope>SUBCELLULAR LOCATION</scope>
    <scope>TISSUE SPECIFICITY</scope>
</reference>
<reference key="6">
    <citation type="journal article" date="2009" name="BMC Mol. Biol.">
        <title>Characterization of the transcripts and protein isoforms for cytoplasmic polyadenylation element binding protein-3 (CPEB3) in the mouse retina.</title>
        <authorList>
            <person name="Wang X.P."/>
            <person name="Cooper N.G."/>
        </authorList>
    </citation>
    <scope>ALTERNATIVE SPLICING</scope>
    <scope>TISSUE SPECIFICITY</scope>
    <scope>DEVELOPMENTAL STAGE</scope>
</reference>
<reference key="7">
    <citation type="journal article" date="2010" name="Cell">
        <title>A tissue-specific atlas of mouse protein phosphorylation and expression.</title>
        <authorList>
            <person name="Huttlin E.L."/>
            <person name="Jedrychowski M.P."/>
            <person name="Elias J.E."/>
            <person name="Goswami T."/>
            <person name="Rad R."/>
            <person name="Beausoleil S.A."/>
            <person name="Villen J."/>
            <person name="Haas W."/>
            <person name="Sowa M.E."/>
            <person name="Gygi S.P."/>
        </authorList>
    </citation>
    <scope>PHOSPHORYLATION [LARGE SCALE ANALYSIS] AT SER-194 AND SER-197</scope>
    <scope>IDENTIFICATION BY MASS SPECTROMETRY [LARGE SCALE ANALYSIS]</scope>
    <source>
        <tissue>Brain</tissue>
        <tissue>Heart</tissue>
        <tissue>Kidney</tissue>
    </source>
</reference>
<reference key="8">
    <citation type="journal article" date="2010" name="Nucleic Acids Res.">
        <title>A novel role of CPEB3 in regulating EGFR gene transcription via association with Stat5b in neurons.</title>
        <authorList>
            <person name="Peng S.C."/>
            <person name="Lai Y.T."/>
            <person name="Huang H.Y."/>
            <person name="Huang H.D."/>
            <person name="Huang Y.S."/>
        </authorList>
    </citation>
    <scope>INTERACTION WITH STAT5B</scope>
</reference>
<reference key="9">
    <citation type="journal article" date="2011" name="Cell">
        <title>Neuralized1 activates CPEB3: a function for nonproteolytic ubiquitin in synaptic plasticity and memory storage.</title>
        <authorList>
            <person name="Pavlopoulos E."/>
            <person name="Trifilieff P."/>
            <person name="Chevaleyre V."/>
            <person name="Fioriti L."/>
            <person name="Zairis S."/>
            <person name="Pagano A."/>
            <person name="Malleret G."/>
            <person name="Kandel E.R."/>
        </authorList>
    </citation>
    <scope>FUNCTION</scope>
    <scope>INTERACTION WITH NEURL1</scope>
    <scope>SUBCELLULAR LOCATION</scope>
    <scope>UBIQUITINATION</scope>
</reference>
<reference key="10">
    <citation type="journal article" date="2012" name="Mol. Cell. Biol.">
        <title>Calpain 2 activated through N-methyl-D-aspartic acid receptor signaling cleaves CPEB3 and abrogates CPEB3-repressed translation in neurons.</title>
        <authorList>
            <person name="Wang C.F."/>
            <person name="Huang Y.S."/>
        </authorList>
    </citation>
    <scope>FUNCTION</scope>
    <scope>INTERACTION WITH CAPN2</scope>
    <scope>SUBCELLULAR LOCATION</scope>
    <scope>PROTEOLYTIC CLEAVAGE</scope>
</reference>
<reference key="11">
    <citation type="journal article" date="2012" name="Nucleic Acids Res.">
        <title>NMDAR signaling facilitates the IPO5-mediated nuclear import of CPEB3.</title>
        <authorList>
            <person name="Chao H.W."/>
            <person name="Lai Y.T."/>
            <person name="Lu Y.L."/>
            <person name="Lin C.L."/>
            <person name="Mai W."/>
            <person name="Huang Y.S."/>
        </authorList>
    </citation>
    <scope>SUBCELLULAR LOCATION</scope>
</reference>
<reference key="12">
    <citation type="journal article" date="2013" name="J. Neurosci.">
        <title>Deletion of CPEB3 enhances hippocampus-dependent memory via increasing expressions of PSD95 and NMDA receptors.</title>
        <authorList>
            <person name="Chao H.W."/>
            <person name="Tsai L.Y."/>
            <person name="Lu Y.L."/>
            <person name="Lin P.Y."/>
            <person name="Huang W.H."/>
            <person name="Chou H.J."/>
            <person name="Lu W.H."/>
            <person name="Lin H.C."/>
            <person name="Lee P.T."/>
            <person name="Huang Y.S."/>
        </authorList>
    </citation>
    <scope>FUNCTION</scope>
    <scope>DISRUPTION PHENOTYPE</scope>
</reference>
<reference key="13">
    <citation type="journal article" date="2014" name="Mol. Cell. Proteomics">
        <title>Immunoaffinity enrichment and mass spectrometry analysis of protein methylation.</title>
        <authorList>
            <person name="Guo A."/>
            <person name="Gu H."/>
            <person name="Zhou J."/>
            <person name="Mulhern D."/>
            <person name="Wang Y."/>
            <person name="Lee K.A."/>
            <person name="Yang V."/>
            <person name="Aguiar M."/>
            <person name="Kornhauser J."/>
            <person name="Jia X."/>
            <person name="Ren J."/>
            <person name="Beausoleil S.A."/>
            <person name="Silva J.C."/>
            <person name="Vemulapalli V."/>
            <person name="Bedford M.T."/>
            <person name="Comb M.J."/>
        </authorList>
    </citation>
    <scope>METHYLATION [LARGE SCALE ANALYSIS] AT ARG-309</scope>
    <scope>IDENTIFICATION BY MASS SPECTROMETRY [LARGE SCALE ANALYSIS]</scope>
    <source>
        <tissue>Brain</tissue>
    </source>
</reference>
<reference key="14">
    <citation type="journal article" date="2015" name="Cell Rep.">
        <title>SUMOylation is an inhibitory constraint that regulates the prion-like aggregation and activity of CPEB3.</title>
        <authorList>
            <person name="Drisaldi B."/>
            <person name="Colnaghi L."/>
            <person name="Fioriti L."/>
            <person name="Rao N."/>
            <person name="Myers C."/>
            <person name="Snyder A.M."/>
            <person name="Metzger D.J."/>
            <person name="Tarasoff J."/>
            <person name="Konstantinov E."/>
            <person name="Fraser P.E."/>
            <person name="Manley J.L."/>
            <person name="Kandel E.R."/>
        </authorList>
    </citation>
    <scope>FUNCTION</scope>
    <scope>INTERACTION WITH UBC9</scope>
    <scope>SUMOYLATION</scope>
</reference>
<reference key="15">
    <citation type="journal article" date="2015" name="Cell Rep.">
        <title>The CPEB3 protein is a functional prion that interacts with the actin cytoskeleton.</title>
        <authorList>
            <person name="Stephan J.S."/>
            <person name="Fioriti L."/>
            <person name="Lamba N."/>
            <person name="Colnaghi L."/>
            <person name="Karl K."/>
            <person name="Derkatch I.L."/>
            <person name="Kandel E.R."/>
        </authorList>
    </citation>
    <scope>FUNCTION</scope>
    <scope>SUBUNIT</scope>
    <scope>INDUCTION</scope>
</reference>
<reference key="16">
    <citation type="journal article" date="2015" name="Neuron">
        <title>The persistence of hippocampal-based memory requires protein synthesis mediated by the prion-like protein CPEB3.</title>
        <authorList>
            <person name="Fioriti L."/>
            <person name="Myers C."/>
            <person name="Huang Y.Y."/>
            <person name="Li X."/>
            <person name="Stephan J.S."/>
            <person name="Trifilieff P."/>
            <person name="Colnaghi L."/>
            <person name="Kosmidis S."/>
            <person name="Drisaldi B."/>
            <person name="Pavlopoulos E."/>
            <person name="Kandel E.R."/>
        </authorList>
    </citation>
    <scope>FUNCTION</scope>
    <scope>SUBUNIT</scope>
    <scope>INDUCTION</scope>
    <scope>DOMAIN</scope>
    <scope>DISRUPTION PHENOTYPE</scope>
</reference>
<reference key="17">
    <citation type="journal article" date="2016" name="PLoS ONE">
        <title>CPEB3 deficiency elevates TRPV1 expression in dorsal root ganglia neurons to potentiate thermosensation.</title>
        <authorList>
            <person name="Fong S.W."/>
            <person name="Lin H.C."/>
            <person name="Wu M.F."/>
            <person name="Chen C.C."/>
            <person name="Huang Y.S."/>
        </authorList>
    </citation>
    <scope>FUNCTION</scope>
    <scope>TISSUE SPECIFICITY</scope>
    <scope>DISRUPTION PHENOTYPE</scope>
</reference>
<reference key="18">
    <citation type="journal article" date="2016" name="PLoS ONE">
        <title>New phosphospecific antibody reveals isoform-specific phosphorylation of CPEB3 protein.</title>
        <authorList>
            <person name="Kaczmarczyk L."/>
            <person name="Labrie-Dion E."/>
            <person name="Sehgal K."/>
            <person name="Sylvester M."/>
            <person name="Skubal M."/>
            <person name="Josten M."/>
            <person name="Steinhaeuser C."/>
            <person name="De Koninck P."/>
            <person name="Theis M."/>
        </authorList>
    </citation>
    <scope>PHOSPHORYLATION AT SER-291; SER-419 AND SER-420</scope>
    <scope>MUTAGENESIS OF SER-419 AND SER-420</scope>
</reference>
<dbReference type="EMBL" id="AY313774">
    <property type="protein sequence ID" value="AAQ20843.1"/>
    <property type="molecule type" value="mRNA"/>
</dbReference>
<dbReference type="EMBL" id="AK147243">
    <property type="protein sequence ID" value="BAE27791.1"/>
    <property type="molecule type" value="mRNA"/>
</dbReference>
<dbReference type="EMBL" id="AK161513">
    <property type="protein sequence ID" value="BAE36436.1"/>
    <property type="molecule type" value="mRNA"/>
</dbReference>
<dbReference type="EMBL" id="AB093274">
    <property type="protein sequence ID" value="BAC41458.1"/>
    <property type="status" value="ALT_INIT"/>
    <property type="molecule type" value="mRNA"/>
</dbReference>
<dbReference type="EMBL" id="BC128377">
    <property type="protein sequence ID" value="AAI28378.1"/>
    <property type="molecule type" value="mRNA"/>
</dbReference>
<dbReference type="CCDS" id="CCDS29775.1">
    <molecule id="Q7TN99-1"/>
</dbReference>
<dbReference type="CCDS" id="CCDS70946.1">
    <molecule id="Q7TN99-4"/>
</dbReference>
<dbReference type="CCDS" id="CCDS70947.1">
    <molecule id="Q7TN99-3"/>
</dbReference>
<dbReference type="RefSeq" id="NP_001277755.1">
    <property type="nucleotide sequence ID" value="NM_001290826.1"/>
</dbReference>
<dbReference type="RefSeq" id="NP_001277756.1">
    <property type="nucleotide sequence ID" value="NM_001290827.1"/>
</dbReference>
<dbReference type="RefSeq" id="NP_001277757.1">
    <molecule id="Q7TN99-3"/>
    <property type="nucleotide sequence ID" value="NM_001290828.1"/>
</dbReference>
<dbReference type="RefSeq" id="NP_001277758.1">
    <property type="nucleotide sequence ID" value="NM_001290829.1"/>
</dbReference>
<dbReference type="RefSeq" id="NP_938042.2">
    <property type="nucleotide sequence ID" value="NM_198300.3"/>
</dbReference>
<dbReference type="RefSeq" id="XP_006526892.1">
    <property type="nucleotide sequence ID" value="XM_006526829.3"/>
</dbReference>
<dbReference type="RefSeq" id="XP_006526893.1">
    <property type="nucleotide sequence ID" value="XM_006526830.3"/>
</dbReference>
<dbReference type="RefSeq" id="XP_006526894.1">
    <property type="nucleotide sequence ID" value="XM_006526831.3"/>
</dbReference>
<dbReference type="RefSeq" id="XP_006526895.1">
    <property type="nucleotide sequence ID" value="XM_006526832.3"/>
</dbReference>
<dbReference type="RefSeq" id="XP_006526896.1">
    <property type="nucleotide sequence ID" value="XM_006526833.3"/>
</dbReference>
<dbReference type="RefSeq" id="XP_006526897.1">
    <property type="nucleotide sequence ID" value="XM_006526834.2"/>
</dbReference>
<dbReference type="RefSeq" id="XP_006526902.1">
    <property type="nucleotide sequence ID" value="XM_006526839.3"/>
</dbReference>
<dbReference type="RefSeq" id="XP_011245510.1">
    <molecule id="Q7TN99-3"/>
    <property type="nucleotide sequence ID" value="XM_011247208.3"/>
</dbReference>
<dbReference type="RefSeq" id="XP_030106699.1">
    <molecule id="Q7TN99-3"/>
    <property type="nucleotide sequence ID" value="XM_030250839.2"/>
</dbReference>
<dbReference type="RefSeq" id="XP_030106700.1">
    <molecule id="Q7TN99-3"/>
    <property type="nucleotide sequence ID" value="XM_030250840.2"/>
</dbReference>
<dbReference type="BMRB" id="Q7TN99"/>
<dbReference type="SMR" id="Q7TN99"/>
<dbReference type="BioGRID" id="229024">
    <property type="interactions" value="2"/>
</dbReference>
<dbReference type="FunCoup" id="Q7TN99">
    <property type="interactions" value="982"/>
</dbReference>
<dbReference type="IntAct" id="Q7TN99">
    <property type="interactions" value="3"/>
</dbReference>
<dbReference type="MINT" id="Q7TN99"/>
<dbReference type="STRING" id="10090.ENSMUSP00000078690"/>
<dbReference type="GlyGen" id="Q7TN99">
    <property type="glycosylation" value="1 site, 1 O-linked glycan (1 site)"/>
</dbReference>
<dbReference type="iPTMnet" id="Q7TN99"/>
<dbReference type="PhosphoSitePlus" id="Q7TN99"/>
<dbReference type="PaxDb" id="10090-ENSMUSP00000118723"/>
<dbReference type="PeptideAtlas" id="Q7TN99"/>
<dbReference type="ProteomicsDB" id="278012">
    <molecule id="Q7TN99-1"/>
</dbReference>
<dbReference type="ProteomicsDB" id="278013">
    <molecule id="Q7TN99-2"/>
</dbReference>
<dbReference type="ProteomicsDB" id="278014">
    <molecule id="Q7TN99-3"/>
</dbReference>
<dbReference type="ProteomicsDB" id="278015">
    <molecule id="Q7TN99-4"/>
</dbReference>
<dbReference type="ProteomicsDB" id="278016">
    <molecule id="Q7TN99-5"/>
</dbReference>
<dbReference type="ProteomicsDB" id="278017">
    <molecule id="Q7TN99-6"/>
</dbReference>
<dbReference type="Antibodypedia" id="30391">
    <property type="antibodies" value="113 antibodies from 19 providers"/>
</dbReference>
<dbReference type="DNASU" id="208922"/>
<dbReference type="Ensembl" id="ENSMUST00000126188.8">
    <molecule id="Q7TN99-3"/>
    <property type="protein sequence ID" value="ENSMUSP00000120416.2"/>
    <property type="gene ID" value="ENSMUSG00000039652.17"/>
</dbReference>
<dbReference type="Ensembl" id="ENSMUST00000126781.2">
    <molecule id="Q7TN99-5"/>
    <property type="protein sequence ID" value="ENSMUSP00000122442.2"/>
    <property type="gene ID" value="ENSMUSG00000039652.17"/>
</dbReference>
<dbReference type="GeneID" id="208922"/>
<dbReference type="KEGG" id="mmu:208922"/>
<dbReference type="UCSC" id="uc008hhz.2">
    <molecule id="Q7TN99-1"/>
    <property type="organism name" value="mouse"/>
</dbReference>
<dbReference type="UCSC" id="uc008hia.2">
    <molecule id="Q7TN99-3"/>
    <property type="organism name" value="mouse"/>
</dbReference>
<dbReference type="UCSC" id="uc008hic.2">
    <molecule id="Q7TN99-5"/>
    <property type="organism name" value="mouse"/>
</dbReference>
<dbReference type="AGR" id="MGI:2443075"/>
<dbReference type="CTD" id="22849"/>
<dbReference type="MGI" id="MGI:2443075">
    <property type="gene designation" value="Cpeb3"/>
</dbReference>
<dbReference type="VEuPathDB" id="HostDB:ENSMUSG00000039652"/>
<dbReference type="eggNOG" id="KOG0129">
    <property type="taxonomic scope" value="Eukaryota"/>
</dbReference>
<dbReference type="GeneTree" id="ENSGT00940000158949"/>
<dbReference type="InParanoid" id="Q7TN99"/>
<dbReference type="OrthoDB" id="10033548at2759"/>
<dbReference type="PhylomeDB" id="Q7TN99"/>
<dbReference type="TreeFam" id="TF317658"/>
<dbReference type="BioGRID-ORCS" id="208922">
    <property type="hits" value="1 hit in 76 CRISPR screens"/>
</dbReference>
<dbReference type="CD-CODE" id="764D0258">
    <property type="entry name" value="Neuronal RNP granule"/>
</dbReference>
<dbReference type="ChiTaRS" id="Cpeb3">
    <property type="organism name" value="mouse"/>
</dbReference>
<dbReference type="PRO" id="PR:Q7TN99"/>
<dbReference type="Proteomes" id="UP000000589">
    <property type="component" value="Chromosome 19"/>
</dbReference>
<dbReference type="RNAct" id="Q7TN99">
    <property type="molecule type" value="protein"/>
</dbReference>
<dbReference type="Bgee" id="ENSMUSG00000039652">
    <property type="expression patterns" value="Expressed in secondary oocyte and 61 other cell types or tissues"/>
</dbReference>
<dbReference type="ExpressionAtlas" id="Q7TN99">
    <property type="expression patterns" value="baseline and differential"/>
</dbReference>
<dbReference type="GO" id="GO:0097440">
    <property type="term" value="C:apical dendrite"/>
    <property type="evidence" value="ECO:0000314"/>
    <property type="project" value="UniProtKB"/>
</dbReference>
<dbReference type="GO" id="GO:0030014">
    <property type="term" value="C:CCR4-NOT complex"/>
    <property type="evidence" value="ECO:0000250"/>
    <property type="project" value="UniProtKB"/>
</dbReference>
<dbReference type="GO" id="GO:0005737">
    <property type="term" value="C:cytoplasm"/>
    <property type="evidence" value="ECO:0000314"/>
    <property type="project" value="UniProtKB"/>
</dbReference>
<dbReference type="GO" id="GO:0030425">
    <property type="term" value="C:dendrite"/>
    <property type="evidence" value="ECO:0000314"/>
    <property type="project" value="UniProtKB"/>
</dbReference>
<dbReference type="GO" id="GO:0098978">
    <property type="term" value="C:glutamatergic synapse"/>
    <property type="evidence" value="ECO:0000314"/>
    <property type="project" value="SynGO"/>
</dbReference>
<dbReference type="GO" id="GO:0043005">
    <property type="term" value="C:neuron projection"/>
    <property type="evidence" value="ECO:0000314"/>
    <property type="project" value="UniProtKB"/>
</dbReference>
<dbReference type="GO" id="GO:0005634">
    <property type="term" value="C:nucleus"/>
    <property type="evidence" value="ECO:0000314"/>
    <property type="project" value="UniProtKB"/>
</dbReference>
<dbReference type="GO" id="GO:0014069">
    <property type="term" value="C:postsynaptic density"/>
    <property type="evidence" value="ECO:0007669"/>
    <property type="project" value="UniProtKB-SubCell"/>
</dbReference>
<dbReference type="GO" id="GO:0045202">
    <property type="term" value="C:synapse"/>
    <property type="evidence" value="ECO:0000314"/>
    <property type="project" value="UniProtKB"/>
</dbReference>
<dbReference type="GO" id="GO:0035925">
    <property type="term" value="F:mRNA 3'-UTR AU-rich region binding"/>
    <property type="evidence" value="ECO:0000314"/>
    <property type="project" value="UniProtKB"/>
</dbReference>
<dbReference type="GO" id="GO:0003730">
    <property type="term" value="F:mRNA 3'-UTR binding"/>
    <property type="evidence" value="ECO:0000314"/>
    <property type="project" value="UniProtKB"/>
</dbReference>
<dbReference type="GO" id="GO:0000900">
    <property type="term" value="F:mRNA regulatory element binding translation repressor activity"/>
    <property type="evidence" value="ECO:0000314"/>
    <property type="project" value="UniProtKB"/>
</dbReference>
<dbReference type="GO" id="GO:0003723">
    <property type="term" value="F:RNA binding"/>
    <property type="evidence" value="ECO:0000314"/>
    <property type="project" value="MGI"/>
</dbReference>
<dbReference type="GO" id="GO:0035613">
    <property type="term" value="F:RNA stem-loop binding"/>
    <property type="evidence" value="ECO:0000314"/>
    <property type="project" value="UniProtKB"/>
</dbReference>
<dbReference type="GO" id="GO:0008135">
    <property type="term" value="F:translation factor activity, RNA binding"/>
    <property type="evidence" value="ECO:0000314"/>
    <property type="project" value="UniProtKB"/>
</dbReference>
<dbReference type="GO" id="GO:0061158">
    <property type="term" value="P:3'-UTR-mediated mRNA destabilization"/>
    <property type="evidence" value="ECO:0000250"/>
    <property type="project" value="UniProtKB"/>
</dbReference>
<dbReference type="GO" id="GO:0071230">
    <property type="term" value="P:cellular response to amino acid stimulus"/>
    <property type="evidence" value="ECO:0000314"/>
    <property type="project" value="UniProtKB"/>
</dbReference>
<dbReference type="GO" id="GO:0007616">
    <property type="term" value="P:long-term memory"/>
    <property type="evidence" value="ECO:0000315"/>
    <property type="project" value="UniProtKB"/>
</dbReference>
<dbReference type="GO" id="GO:1900248">
    <property type="term" value="P:negative regulation of cytoplasmic translational elongation"/>
    <property type="evidence" value="ECO:0000314"/>
    <property type="project" value="UniProtKB"/>
</dbReference>
<dbReference type="GO" id="GO:0000122">
    <property type="term" value="P:negative regulation of transcription by RNA polymerase II"/>
    <property type="evidence" value="ECO:0000250"/>
    <property type="project" value="UniProtKB"/>
</dbReference>
<dbReference type="GO" id="GO:0017148">
    <property type="term" value="P:negative regulation of translation"/>
    <property type="evidence" value="ECO:0000314"/>
    <property type="project" value="UniProtKB"/>
</dbReference>
<dbReference type="GO" id="GO:0060999">
    <property type="term" value="P:positive regulation of dendritic spine development"/>
    <property type="evidence" value="ECO:0000314"/>
    <property type="project" value="UniProtKB"/>
</dbReference>
<dbReference type="GO" id="GO:1900273">
    <property type="term" value="P:positive regulation of long-term synaptic potentiation"/>
    <property type="evidence" value="ECO:0000315"/>
    <property type="project" value="UniProtKB"/>
</dbReference>
<dbReference type="GO" id="GO:1900153">
    <property type="term" value="P:positive regulation of nuclear-transcribed mRNA catabolic process, deadenylation-dependent decay"/>
    <property type="evidence" value="ECO:0000250"/>
    <property type="project" value="UniProtKB"/>
</dbReference>
<dbReference type="GO" id="GO:0060213">
    <property type="term" value="P:positive regulation of nuclear-transcribed mRNA poly(A) tail shortening"/>
    <property type="evidence" value="ECO:0000250"/>
    <property type="project" value="UniProtKB"/>
</dbReference>
<dbReference type="GO" id="GO:0045727">
    <property type="term" value="P:positive regulation of translation"/>
    <property type="evidence" value="ECO:0000314"/>
    <property type="project" value="UniProtKB"/>
</dbReference>
<dbReference type="GO" id="GO:0060998">
    <property type="term" value="P:regulation of dendritic spine development"/>
    <property type="evidence" value="ECO:0000315"/>
    <property type="project" value="UniProtKB"/>
</dbReference>
<dbReference type="GO" id="GO:0150052">
    <property type="term" value="P:regulation of postsynapse assembly"/>
    <property type="evidence" value="ECO:0000314"/>
    <property type="project" value="SynGO"/>
</dbReference>
<dbReference type="GO" id="GO:0048167">
    <property type="term" value="P:regulation of synaptic plasticity"/>
    <property type="evidence" value="ECO:0000315"/>
    <property type="project" value="UniProtKB"/>
</dbReference>
<dbReference type="GO" id="GO:0050955">
    <property type="term" value="P:thermoception"/>
    <property type="evidence" value="ECO:0000315"/>
    <property type="project" value="UniProtKB"/>
</dbReference>
<dbReference type="GO" id="GO:0006412">
    <property type="term" value="P:translation"/>
    <property type="evidence" value="ECO:0000315"/>
    <property type="project" value="MGI"/>
</dbReference>
<dbReference type="CDD" id="cd19757">
    <property type="entry name" value="Bbox1"/>
    <property type="match status" value="1"/>
</dbReference>
<dbReference type="CDD" id="cd12724">
    <property type="entry name" value="RRM1_CPEB2_like"/>
    <property type="match status" value="1"/>
</dbReference>
<dbReference type="CDD" id="cd12726">
    <property type="entry name" value="RRM2_CPEB2_like"/>
    <property type="match status" value="1"/>
</dbReference>
<dbReference type="FunFam" id="3.30.70.330:FF:000008">
    <property type="entry name" value="Cytoplasmic polyadenylation element-binding 2 isoform X2"/>
    <property type="match status" value="1"/>
</dbReference>
<dbReference type="FunFam" id="4.10.640.40:FF:000001">
    <property type="entry name" value="Cytoplasmic polyadenylation element-binding 2 isoform X2"/>
    <property type="match status" value="1"/>
</dbReference>
<dbReference type="FunFam" id="3.30.70.330:FF:000009">
    <property type="entry name" value="cytoplasmic polyadenylation element-binding protein 2 isoform X1"/>
    <property type="match status" value="1"/>
</dbReference>
<dbReference type="Gene3D" id="3.30.70.330">
    <property type="match status" value="2"/>
</dbReference>
<dbReference type="Gene3D" id="4.10.640.40">
    <property type="entry name" value="Cytoplasmic polyadenylation element-binding protein, ZZ domain"/>
    <property type="match status" value="1"/>
</dbReference>
<dbReference type="InterPro" id="IPR032296">
    <property type="entry name" value="CEBP_ZZ"/>
</dbReference>
<dbReference type="InterPro" id="IPR038446">
    <property type="entry name" value="CEBP_ZZ_sf"/>
</dbReference>
<dbReference type="InterPro" id="IPR034819">
    <property type="entry name" value="CPEB"/>
</dbReference>
<dbReference type="InterPro" id="IPR012677">
    <property type="entry name" value="Nucleotide-bd_a/b_plait_sf"/>
</dbReference>
<dbReference type="InterPro" id="IPR035979">
    <property type="entry name" value="RBD_domain_sf"/>
</dbReference>
<dbReference type="InterPro" id="IPR000504">
    <property type="entry name" value="RRM_dom"/>
</dbReference>
<dbReference type="PANTHER" id="PTHR12566">
    <property type="entry name" value="CYTOPLASMIC POLYADENYLATION ELEMENT BINDING PROTEIN CPEB"/>
    <property type="match status" value="1"/>
</dbReference>
<dbReference type="PANTHER" id="PTHR12566:SF7">
    <property type="entry name" value="CYTOPLASMIC POLYADENYLATION ELEMENT-BINDING PROTEIN 3"/>
    <property type="match status" value="1"/>
</dbReference>
<dbReference type="Pfam" id="PF16366">
    <property type="entry name" value="CEBP_ZZ"/>
    <property type="match status" value="1"/>
</dbReference>
<dbReference type="Pfam" id="PF16367">
    <property type="entry name" value="RRM_7"/>
    <property type="match status" value="1"/>
</dbReference>
<dbReference type="SMART" id="SM00360">
    <property type="entry name" value="RRM"/>
    <property type="match status" value="2"/>
</dbReference>
<dbReference type="SUPFAM" id="SSF54928">
    <property type="entry name" value="RNA-binding domain, RBD"/>
    <property type="match status" value="1"/>
</dbReference>
<dbReference type="PROSITE" id="PS50102">
    <property type="entry name" value="RRM"/>
    <property type="match status" value="2"/>
</dbReference>
<name>CPEB3_MOUSE</name>
<accession>Q7TN99</accession>
<accession>A1A562</accession>
<accession>Q3TT89</accession>
<accession>Q3UHR6</accession>
<accession>Q8CHC2</accession>
<protein>
    <recommendedName>
        <fullName>Cytoplasmic polyadenylation element-binding protein 3</fullName>
        <shortName>CPE-BP3</shortName>
        <shortName>CPE-binding protein 3</shortName>
        <shortName>mCPEB-3</shortName>
    </recommendedName>
</protein>
<evidence type="ECO:0000250" key="1">
    <source>
        <dbReference type="UniProtKB" id="Q8NE35"/>
    </source>
</evidence>
<evidence type="ECO:0000255" key="2">
    <source>
        <dbReference type="PROSITE-ProRule" id="PRU00176"/>
    </source>
</evidence>
<evidence type="ECO:0000256" key="3">
    <source>
        <dbReference type="SAM" id="MobiDB-lite"/>
    </source>
</evidence>
<evidence type="ECO:0000269" key="4">
    <source>
    </source>
</evidence>
<evidence type="ECO:0000269" key="5">
    <source>
    </source>
</evidence>
<evidence type="ECO:0000269" key="6">
    <source>
    </source>
</evidence>
<evidence type="ECO:0000269" key="7">
    <source>
    </source>
</evidence>
<evidence type="ECO:0000269" key="8">
    <source>
    </source>
</evidence>
<evidence type="ECO:0000269" key="9">
    <source>
    </source>
</evidence>
<evidence type="ECO:0000269" key="10">
    <source>
    </source>
</evidence>
<evidence type="ECO:0000269" key="11">
    <source>
    </source>
</evidence>
<evidence type="ECO:0000269" key="12">
    <source>
    </source>
</evidence>
<evidence type="ECO:0000269" key="13">
    <source>
    </source>
</evidence>
<evidence type="ECO:0000269" key="14">
    <source>
    </source>
</evidence>
<evidence type="ECO:0000269" key="15">
    <source>
    </source>
</evidence>
<evidence type="ECO:0000269" key="16">
    <source>
    </source>
</evidence>
<evidence type="ECO:0000303" key="17">
    <source>
    </source>
</evidence>
<evidence type="ECO:0000303" key="18">
    <source>
    </source>
</evidence>
<evidence type="ECO:0000303" key="19">
    <source>
    </source>
</evidence>
<evidence type="ECO:0000305" key="20"/>
<evidence type="ECO:0007744" key="21">
    <source>
    </source>
</evidence>
<evidence type="ECO:0007744" key="22">
    <source>
    </source>
</evidence>
<proteinExistence type="evidence at protein level"/>
<gene>
    <name type="primary">Cpeb3</name>
    <name type="synonym">Kiaa0940</name>
</gene>
<sequence length="716" mass="78335">MQDDLLMDKSKTQPQSQQQQRQQQQQQQQLQPEPGAAEAPSTPLSSEIPKPEDSSAVPALSPASAPPAPNGPDKMQMESPLLPGLSFHQPPQQPPPPQEPTAPGASLSPSFGSTWSTGTTNAVEDSFFQGITPVNGTMLFQNFPHHVNPVFGGTFSPQIGLAQTQHHQQPPPPAPQPPQPAQPPQAQPSQQRRSPASPSQAPYAQRSAAAYGHQPIMTSKPSSSSAVAAAAAAAAASSASSSWNTHQSVNAAWSAPSNPWGGLQAGRDPRRAVGVGVGVGVGVPSPLNPISPLKKPFSSNVIAPPKFPRAAPLTSKSWMEDNAFRTDNGNNLLPFQDRSRPYDTFNLHSLENSLMDMIRTDHEPLKGKHYPNSGPPMSFADIMWRNHFAGRMGINFHHPGTDNIMALNTRSYGRRRGRSSLFPFEDAFLDDSHGDQALSSGLSSPTRCQNGERVERYSRKVFVGGLPPDIDEDEITASFRRFGPLVVDWPHKAESKSYFPPKGYAFLLFQEESSVQALIDACLEEDGKLYLCVSSPTIKDKPVQIRPWNLSDSDFVMDGSQPLDPRKTIFVGGVPRPLRAVELAMIMDRLYGGVCYAGIDTDPELKYPKGAGRVAFSNQQSYIAAISARFVQLQHNDIDKRVEVKPYVLDDQMCDECQGTRCGGKFAPFFCANVTCLQYYCEYCWASIHSRAGREFHKPLVKEGGDRPRHVPFRWS</sequence>
<keyword id="KW-0010">Activator</keyword>
<keyword id="KW-0025">Alternative splicing</keyword>
<keyword id="KW-0034">Amyloid</keyword>
<keyword id="KW-0966">Cell projection</keyword>
<keyword id="KW-0963">Cytoplasm</keyword>
<keyword id="KW-0488">Methylation</keyword>
<keyword id="KW-0539">Nucleus</keyword>
<keyword id="KW-0597">Phosphoprotein</keyword>
<keyword id="KW-1185">Reference proteome</keyword>
<keyword id="KW-0677">Repeat</keyword>
<keyword id="KW-0678">Repressor</keyword>
<keyword id="KW-0694">RNA-binding</keyword>
<keyword id="KW-0770">Synapse</keyword>
<keyword id="KW-0810">Translation regulation</keyword>
<keyword id="KW-0832">Ubl conjugation</keyword>
<organism>
    <name type="scientific">Mus musculus</name>
    <name type="common">Mouse</name>
    <dbReference type="NCBI Taxonomy" id="10090"/>
    <lineage>
        <taxon>Eukaryota</taxon>
        <taxon>Metazoa</taxon>
        <taxon>Chordata</taxon>
        <taxon>Craniata</taxon>
        <taxon>Vertebrata</taxon>
        <taxon>Euteleostomi</taxon>
        <taxon>Mammalia</taxon>
        <taxon>Eutheria</taxon>
        <taxon>Euarchontoglires</taxon>
        <taxon>Glires</taxon>
        <taxon>Rodentia</taxon>
        <taxon>Myomorpha</taxon>
        <taxon>Muroidea</taxon>
        <taxon>Muridae</taxon>
        <taxon>Murinae</taxon>
        <taxon>Mus</taxon>
        <taxon>Mus</taxon>
    </lineage>
</organism>
<comment type="function">
    <text evidence="1 5 8 9 11 12 13 14 15">Sequence-specific RNA-binding protein which acts as a translational repressor in the basal unstimulated state but, following neuronal stimulation, acts as a translational activator (PubMed:17024188, PubMed:26074072). In contrast to CPEB1, does not bind to the cytoplasmic polyadenylation element (CPE), a uridine-rich sequence element within the mRNA 3'-UTR, but binds to a U-rich loop within a stem-loop structure (PubMed:17024188). Required for the consolidation and maintenance of hippocampal-based long term memory (PubMed:26074003). In the basal state, binds to the mRNA 3'-UTR of the glutamate receptors GRIA1 and GRIA2 and negatively regulates their translation (PubMed:17024188, PubMed:22153079). Also represses the translation of DLG4, GRIN1 GRIN2A and GRIN2B (PubMed:24155305). When activated, acts as a translational activator of GRIA1 and GRIA2 (PubMed:22153079, PubMed:26074003). In the basal state, suppresses SUMO2 translation but activates it following neuronal stimulation (PubMed:26074071). Binds to the 3'-UTR of TRPV1 mRNA and represses TRPV1 translation which is required to maintain normal thermoception (PubMed:26915043). Binds actin mRNA, leading to actin translational repression in the basal state and to translational activation following neuronal stimulation (PubMed:26074072). Negatively regulates target mRNA levels by binding to TOB1 which recruits CNOT7/CAF1 to a ternary complex and this leads to target mRNA deadenylation and decay (By similarity). In addition to its role in translation, binds to and inhibits the transcriptional activation activity of STAT5B without affecting its dimerization or DNA-binding activity. This, in turn, represses transcription of the STAT5B target gene EGFR which has been shown to play a role in enhancing learning and memory performance (By similarity). In contrast to CPEB1, CPEB2 and CPEB4, not required for cell cycle progression (By similarity).</text>
</comment>
<comment type="subunit">
    <text evidence="1 7 8 9 12 13 14">Following synaptic activity, aggregates to form amyloid-like oligomers (PubMed:26074003, PubMed:26074072). Aggregation requires an intact actin cytoskeleton (PubMed:26074072). Interacts with STAT5B; this inhibits STAT5B-mediated transcriptional activation (PubMed:20639532). Interacts with E3 ubiquitin-protein ligase NEURL1; this leads to monoubiquitination and activation of CPEB3 (PubMed:22153079). Interacts with CAPN2; this leads to cleavage of CPEB3 (PubMed:22711986). Interacts (via C-terminal RNA-binding region) with TOB1; TOB1 also binds CNOT7/CAF1 and recruits it to CPEB3 to form a ternary complex (By similarity). Interacts with SUMO-conjugating enzyme UBC9 (PubMed:26074071). Interacts with IPO5; the interaction is enhanced in a RAN-regulated manner following neuronal stimulation and mediates CPEB3 nuclear import (By similarity). Interacts with exportin XPO1/CRM1 (By similarity).</text>
</comment>
<comment type="interaction">
    <interactant intactId="EBI-5376779">
        <id>Q7TN99</id>
    </interactant>
    <interactant intactId="EBI-5376802">
        <id>Q923S6</id>
        <label>Neurl1</label>
    </interactant>
    <organismsDiffer>false</organismsDiffer>
    <experiments>9</experiments>
</comment>
<comment type="interaction">
    <interactant intactId="EBI-5376779">
        <id>Q7TN99</id>
    </interactant>
    <interactant intactId="EBI-413074">
        <id>P62991</id>
        <label>Ubc</label>
    </interactant>
    <organismsDiffer>false</organismsDiffer>
    <experiments>2</experiments>
</comment>
<comment type="subcellular location">
    <subcellularLocation>
        <location evidence="9">Cytoplasm</location>
    </subcellularLocation>
    <subcellularLocation>
        <location evidence="9">Nucleus</location>
    </subcellularLocation>
    <subcellularLocation>
        <location evidence="5">Synapse</location>
    </subcellularLocation>
    <subcellularLocation>
        <location evidence="5 8 9">Cell projection</location>
        <location evidence="5 8 9">Dendrite</location>
    </subcellularLocation>
    <subcellularLocation>
        <location evidence="5">Postsynaptic density</location>
    </subcellularLocation>
    <text evidence="9 10">Predominantly cytoplasmic in unstimulated neurons but translocates to the nucleus following neuronal stimulation (PubMed:22711986). Nuclear import is mediated by importin IPO5 (PubMed:22730302).</text>
</comment>
<comment type="alternative products">
    <event type="alternative splicing"/>
    <isoform>
        <id>Q7TN99-1</id>
        <name>1</name>
        <name>mCPEB-3a</name>
        <sequence type="displayed"/>
    </isoform>
    <isoform>
        <id>Q7TN99-2</id>
        <name>2</name>
        <name>mCPEB-3b</name>
        <sequence type="described" ref="VSP_022037"/>
    </isoform>
    <isoform>
        <id>Q7TN99-3</id>
        <name>3</name>
        <name>mCPEB-3c</name>
        <sequence type="described" ref="VSP_022036"/>
    </isoform>
    <isoform>
        <id>Q7TN99-4</id>
        <name>4</name>
        <name>mCPEB-3d</name>
        <sequence type="described" ref="VSP_022036 VSP_022037"/>
    </isoform>
    <isoform>
        <id>Q7TN99-5</id>
        <name>5</name>
        <sequence type="described" ref="VSP_022036 VSP_022038 VSP_022039"/>
    </isoform>
    <isoform>
        <id>Q7TN99-6</id>
        <name>6</name>
        <sequence type="described" ref="VSP_058565 VSP_022036"/>
    </isoform>
</comment>
<comment type="tissue specificity">
    <text evidence="4 5 6 15">Highly expressed in brain (at protein level) (PubMed:17024188). In brain, expressed in the hippocampus, granule cells and interneurons of the cerebellum, and mitral cells of the olfactory bulb (at protein level) (PubMed:17024188). Detected in the spinal cord and in peripheral dorsal root ganglia (at protein level) (PubMed:26915043). In the retina, strongly expressed in the retinal ganglion layer and, to a lesser extent, in the inner margin of the inner nuclear layer with expression also detected in the inner and outer plexiform layers (at protein level) (PubMed:20003455). Highly expressed in brain and heart, less in liver, kidney, embryo, skeletal muscle, lung and ovary (PubMed:12871996). Weakly expressed in granular cells of dentate gyrus and the pyramidal cells of CA3 and CA1 of the hippocampus (PubMed:12871996).</text>
</comment>
<comment type="developmental stage">
    <text evidence="6">In the retina, expression increases throughout postnatal development and remains high in the adult (at protein level).</text>
</comment>
<comment type="induction">
    <text evidence="4 12 14">Up-regulated following synaptic activity (at protein level) (PubMed:26074003, PubMed:26074072). Up-regulated in granular cells of the dentate gyrus and the pyramidal cells of CA1 and CA3 after kainate-induced seizures (PubMed:12871996).</text>
</comment>
<comment type="domain">
    <text evidence="12">The N-terminal Gln-rich region is required for the formation of amyloid-like oligomers and for the stability of long-term potentiation and spatial memory.</text>
</comment>
<comment type="PTM">
    <text evidence="8">Activated by NEURL1-mediated monoubiquitination, resulting in the growth of new dendritic spines and increased levels of GRIA1 and GRIA2. NEURL1-mediated monoubiquitination facilitates synaptic plasticity and hippocampal-dependent memory storage.</text>
</comment>
<comment type="PTM">
    <text evidence="13">Under basal unstimulated conditions when CPEB3 is mainly unaggregated, sumoylated and acts as a translational repressor. Following neuronal stimulation, becomes desumoylated and aggregated which is required for the translation of mRNA targets and for dendritic filopodia formation.</text>
</comment>
<comment type="PTM">
    <text evidence="9">Following neuronal stimulation, cleaved by CAPN2 which abolishes its translational repressor activity, leading to translation of CPEB3 target mRNAs.</text>
</comment>
<comment type="PTM">
    <text evidence="16">Phosphorylation is enhanced by neuronal stimulation.</text>
</comment>
<comment type="disruption phenotype">
    <text evidence="12 13 15">Enhanced thermal sensitivity and increased levels of Trpv1 in lumbar sciatic nerves and spinal cord (PubMed:26915043). Elevated short-term fear response, enhanced long-term spatial memory, dendritic spine enlargement and elevated levels of Dlg4/Psd95, Gria1 and NMDA receptor subunits Grin1, Grin2a and Grin2b (PubMed:26074071). Conditional knockout in the adult forebrain results in viable mice with no gross neurological defects which display normal locomotor, exploratory and anxiety behaviors but have impaired long-term memory, impaired long-term synaptic plasticity and increased levels of Gria1 and Gria2 (PubMed:26074003).</text>
</comment>
<comment type="similarity">
    <text evidence="20">Belongs to the RRM CPEB family.</text>
</comment>
<comment type="sequence caution" evidence="20">
    <conflict type="erroneous initiation">
        <sequence resource="EMBL-CDS" id="BAC41458"/>
    </conflict>
</comment>
<feature type="chain" id="PRO_0000269262" description="Cytoplasmic polyadenylation element-binding protein 3">
    <location>
        <begin position="1"/>
        <end position="716"/>
    </location>
</feature>
<feature type="domain" description="RRM 1" evidence="2">
    <location>
        <begin position="459"/>
        <end position="550"/>
    </location>
</feature>
<feature type="domain" description="RRM 2" evidence="2">
    <location>
        <begin position="567"/>
        <end position="649"/>
    </location>
</feature>
<feature type="region of interest" description="Disordered" evidence="3">
    <location>
        <begin position="1"/>
        <end position="118"/>
    </location>
</feature>
<feature type="region of interest" description="Disordered" evidence="3">
    <location>
        <begin position="162"/>
        <end position="209"/>
    </location>
</feature>
<feature type="compositionally biased region" description="Basic and acidic residues" evidence="3">
    <location>
        <begin position="1"/>
        <end position="11"/>
    </location>
</feature>
<feature type="compositionally biased region" description="Low complexity" evidence="3">
    <location>
        <begin position="13"/>
        <end position="31"/>
    </location>
</feature>
<feature type="compositionally biased region" description="Low complexity" evidence="3">
    <location>
        <begin position="54"/>
        <end position="63"/>
    </location>
</feature>
<feature type="compositionally biased region" description="Pro residues" evidence="3">
    <location>
        <begin position="91"/>
        <end position="100"/>
    </location>
</feature>
<feature type="compositionally biased region" description="Polar residues" evidence="3">
    <location>
        <begin position="107"/>
        <end position="118"/>
    </location>
</feature>
<feature type="compositionally biased region" description="Pro residues" evidence="3">
    <location>
        <begin position="169"/>
        <end position="186"/>
    </location>
</feature>
<feature type="compositionally biased region" description="Low complexity" evidence="3">
    <location>
        <begin position="187"/>
        <end position="209"/>
    </location>
</feature>
<feature type="site" description="Cleavage; by CAPN2" evidence="9">
    <location>
        <begin position="459"/>
        <end position="460"/>
    </location>
</feature>
<feature type="site" description="Required for RNA-binding activity" evidence="1">
    <location>
        <position position="462"/>
    </location>
</feature>
<feature type="site" description="Required for RNA-binding activity" evidence="1">
    <location>
        <position position="506"/>
    </location>
</feature>
<feature type="modified residue" description="Phosphoserine" evidence="21">
    <location>
        <position position="194"/>
    </location>
</feature>
<feature type="modified residue" description="Phosphoserine" evidence="21">
    <location>
        <position position="197"/>
    </location>
</feature>
<feature type="modified residue" description="Phosphoserine" evidence="16">
    <location>
        <position position="291"/>
    </location>
</feature>
<feature type="modified residue" description="Asymmetric dimethylarginine" evidence="22">
    <location>
        <position position="309"/>
    </location>
</feature>
<feature type="modified residue" description="Phosphoserine" evidence="16">
    <location>
        <position position="419"/>
    </location>
</feature>
<feature type="modified residue" description="Phosphoserine" evidence="16">
    <location>
        <position position="420"/>
    </location>
</feature>
<feature type="splice variant" id="VSP_058565" description="In isoform 6." evidence="19">
    <location>
        <begin position="1"/>
        <end position="216"/>
    </location>
</feature>
<feature type="splice variant" id="VSP_022036" description="In isoform 3, isoform 4, isoform 5 and isoform 6." evidence="17 18 19">
    <location>
        <begin position="367"/>
        <end position="389"/>
    </location>
</feature>
<feature type="splice variant" id="VSP_022037" description="In isoform 2 and isoform 4." evidence="17">
    <location>
        <begin position="409"/>
        <end position="416"/>
    </location>
</feature>
<feature type="splice variant" id="VSP_022038" description="In isoform 5." evidence="18">
    <original>VELA</original>
    <variation>GEWK</variation>
    <location>
        <begin position="581"/>
        <end position="584"/>
    </location>
</feature>
<feature type="splice variant" id="VSP_022039" description="In isoform 5." evidence="18">
    <location>
        <begin position="585"/>
        <end position="716"/>
    </location>
</feature>
<feature type="mutagenesis site" description="Abolishes phosphorylation by PKA." evidence="16">
    <original>S</original>
    <variation>A</variation>
    <location>
        <position position="419"/>
    </location>
</feature>
<feature type="mutagenesis site" description="Reduces phosphorylation by PKA." evidence="16">
    <original>S</original>
    <variation>A</variation>
    <location>
        <position position="420"/>
    </location>
</feature>
<feature type="sequence conflict" description="In Ref. 2; BAE27791 and 3; BAC41458." evidence="20" ref="2 3">
    <original>N</original>
    <variation>P</variation>
    <location>
        <position position="372"/>
    </location>
</feature>